<comment type="function">
    <text evidence="1">Responsible for synthesis of pseudouridine from uracil-65 in transfer RNAs.</text>
</comment>
<comment type="catalytic activity">
    <reaction>
        <text>uridine(65) in tRNA = pseudouridine(65) in tRNA</text>
        <dbReference type="Rhea" id="RHEA:42536"/>
        <dbReference type="Rhea" id="RHEA-COMP:10103"/>
        <dbReference type="Rhea" id="RHEA-COMP:10104"/>
        <dbReference type="ChEBI" id="CHEBI:65314"/>
        <dbReference type="ChEBI" id="CHEBI:65315"/>
        <dbReference type="EC" id="5.4.99.26"/>
    </reaction>
</comment>
<comment type="similarity">
    <text evidence="2">In the C-terminal section; belongs to the pseudouridine synthase RluA family.</text>
</comment>
<comment type="similarity">
    <text evidence="2">To E.coli YqcC in the N-terminal section.</text>
</comment>
<comment type="caution">
    <text evidence="2">There might be a sequencing error that fuses together two ORFs.</text>
</comment>
<gene>
    <name type="primary">truC</name>
</gene>
<reference key="1">
    <citation type="submission" date="1994-05" db="EMBL/GenBank/DDBJ databases">
        <title>Global regulation of Erwinia carotovora exoenzyme virulence factors: multicopy suppression of rex mutants and evidence for a global repression regulon.</title>
        <authorList>
            <person name="Golby P."/>
            <person name="Jones S.E."/>
            <person name="Stephens S."/>
            <person name="Reeves P.J."/>
            <person name="Bycroft B."/>
            <person name="Stewart G."/>
            <person name="Williams P."/>
            <person name="Salmond G.P.C."/>
        </authorList>
    </citation>
    <scope>NUCLEOTIDE SEQUENCE [GENOMIC DNA]</scope>
    <source>
        <strain>SCRI 193</strain>
    </source>
</reference>
<name>TRUC_PECCC</name>
<dbReference type="EC" id="5.4.99.26"/>
<dbReference type="EMBL" id="X79474">
    <property type="protein sequence ID" value="CAA55982.1"/>
    <property type="molecule type" value="Genomic_DNA"/>
</dbReference>
<dbReference type="PIR" id="S45107">
    <property type="entry name" value="S45107"/>
</dbReference>
<dbReference type="SMR" id="Q47417"/>
<dbReference type="GO" id="GO:0003723">
    <property type="term" value="F:RNA binding"/>
    <property type="evidence" value="ECO:0007669"/>
    <property type="project" value="InterPro"/>
</dbReference>
<dbReference type="GO" id="GO:0160149">
    <property type="term" value="F:tRNA pseudouridine(65) synthase activity"/>
    <property type="evidence" value="ECO:0007669"/>
    <property type="project" value="UniProtKB-EC"/>
</dbReference>
<dbReference type="GO" id="GO:0000455">
    <property type="term" value="P:enzyme-directed rRNA pseudouridine synthesis"/>
    <property type="evidence" value="ECO:0007669"/>
    <property type="project" value="TreeGrafter"/>
</dbReference>
<dbReference type="GO" id="GO:0008033">
    <property type="term" value="P:tRNA processing"/>
    <property type="evidence" value="ECO:0007669"/>
    <property type="project" value="UniProtKB-KW"/>
</dbReference>
<dbReference type="CDD" id="cd02563">
    <property type="entry name" value="PseudoU_synth_TruC"/>
    <property type="match status" value="1"/>
</dbReference>
<dbReference type="FunFam" id="3.30.2350.10:FF:000008">
    <property type="entry name" value="tRNA pseudouridine synthase C"/>
    <property type="match status" value="1"/>
</dbReference>
<dbReference type="Gene3D" id="3.30.2350.10">
    <property type="entry name" value="Pseudouridine synthase"/>
    <property type="match status" value="1"/>
</dbReference>
<dbReference type="Gene3D" id="1.20.1440.40">
    <property type="entry name" value="YqcC-like"/>
    <property type="match status" value="1"/>
</dbReference>
<dbReference type="InterPro" id="IPR020103">
    <property type="entry name" value="PsdUridine_synth_cat_dom_sf"/>
</dbReference>
<dbReference type="InterPro" id="IPR006224">
    <property type="entry name" value="PsdUridine_synth_RluA-like_CS"/>
</dbReference>
<dbReference type="InterPro" id="IPR006145">
    <property type="entry name" value="PsdUridine_synth_RsuA/RluA"/>
</dbReference>
<dbReference type="InterPro" id="IPR050188">
    <property type="entry name" value="RluA_PseudoU_synthase"/>
</dbReference>
<dbReference type="InterPro" id="IPR023376">
    <property type="entry name" value="YqcC-like_dom"/>
</dbReference>
<dbReference type="InterPro" id="IPR036814">
    <property type="entry name" value="YqcC-like_sf"/>
</dbReference>
<dbReference type="NCBIfam" id="NF008321">
    <property type="entry name" value="PRK11112.1"/>
    <property type="match status" value="1"/>
</dbReference>
<dbReference type="PANTHER" id="PTHR21600">
    <property type="entry name" value="MITOCHONDRIAL RNA PSEUDOURIDINE SYNTHASE"/>
    <property type="match status" value="1"/>
</dbReference>
<dbReference type="PANTHER" id="PTHR21600:SF56">
    <property type="entry name" value="TRNA PSEUDOURIDINE SYNTHASE C"/>
    <property type="match status" value="1"/>
</dbReference>
<dbReference type="Pfam" id="PF04287">
    <property type="entry name" value="DUF446"/>
    <property type="match status" value="1"/>
</dbReference>
<dbReference type="Pfam" id="PF00849">
    <property type="entry name" value="PseudoU_synth_2"/>
    <property type="match status" value="1"/>
</dbReference>
<dbReference type="SUPFAM" id="SSF55120">
    <property type="entry name" value="Pseudouridine synthase"/>
    <property type="match status" value="1"/>
</dbReference>
<dbReference type="SUPFAM" id="SSF158452">
    <property type="entry name" value="YqcC-like"/>
    <property type="match status" value="1"/>
</dbReference>
<dbReference type="PROSITE" id="PS01129">
    <property type="entry name" value="PSI_RLU"/>
    <property type="match status" value="1"/>
</dbReference>
<accession>Q47417</accession>
<protein>
    <recommendedName>
        <fullName>tRNA pseudouridine synthase C</fullName>
        <ecNumber>5.4.99.26</ecNumber>
    </recommendedName>
    <alternativeName>
        <fullName>tRNA pseudouridine(65) synthase</fullName>
    </alternativeName>
    <alternativeName>
        <fullName>tRNA pseudouridylate synthase C</fullName>
    </alternativeName>
    <alternativeName>
        <fullName>tRNA-uridine isomerase C</fullName>
    </alternativeName>
</protein>
<feature type="chain" id="PRO_0000162724" description="tRNA pseudouridine synthase C">
    <location>
        <begin position="1"/>
        <end position="376"/>
    </location>
</feature>
<feature type="active site" evidence="1">
    <location>
        <position position="168"/>
    </location>
</feature>
<proteinExistence type="inferred from homology"/>
<sequence length="376" mass="43605">MSRENQVRQSLFDIERALRESPFWQVVPPEEEAFNSTEPFSLDTMKPEEWLQWVFLPRMHALLDSELALPRSWFYCLILKKRWKGRQKRPRRFCCVSSSSMSYSPPMYRMAQCTMLEIIYQDEHLVAVNKPSGWLVHRSWLDRKEKVVVMQTVRDQIGQHVYTVHRLDRPTSGVLLLALSSEVARALSQQFESHQMQKTYHAVVRGYVLDDGVIDYALTEELDKIADKFTNPDKAPQPAVTHYRSLAQAEMPVAIGRYPTARYSLMELKPQTGRKHQLRRHMSHIHHPIIGDTAHGDLRHNRGMESHFSCGRLMLHASELQLNHPVSGQPLTLQARWDAPWQGVVTQFGWKGILPEFEGVEFPADSGQDSEHFVEQ</sequence>
<keyword id="KW-0413">Isomerase</keyword>
<keyword id="KW-0819">tRNA processing</keyword>
<organism>
    <name type="scientific">Pectobacterium carotovorum subsp. carotovorum</name>
    <name type="common">Erwinia carotovora subsp. carotovora</name>
    <dbReference type="NCBI Taxonomy" id="555"/>
    <lineage>
        <taxon>Bacteria</taxon>
        <taxon>Pseudomonadati</taxon>
        <taxon>Pseudomonadota</taxon>
        <taxon>Gammaproteobacteria</taxon>
        <taxon>Enterobacterales</taxon>
        <taxon>Pectobacteriaceae</taxon>
        <taxon>Pectobacterium</taxon>
    </lineage>
</organism>
<evidence type="ECO:0000250" key="1"/>
<evidence type="ECO:0000305" key="2"/>